<protein>
    <recommendedName>
        <fullName evidence="2">F-box/SPRY domain-containing protein 1</fullName>
    </recommendedName>
</protein>
<evidence type="ECO:0000250" key="1"/>
<evidence type="ECO:0000250" key="2">
    <source>
        <dbReference type="UniProtKB" id="Q9V6L9"/>
    </source>
</evidence>
<evidence type="ECO:0000255" key="3"/>
<evidence type="ECO:0000255" key="4">
    <source>
        <dbReference type="PROSITE-ProRule" id="PRU00548"/>
    </source>
</evidence>
<evidence type="ECO:0000305" key="5"/>
<evidence type="ECO:0000312" key="6">
    <source>
        <dbReference type="EMBL" id="EDW09978.1"/>
    </source>
</evidence>
<accession>B4KNC5</accession>
<comment type="function">
    <text evidence="1">Required in the presynaptic motoneuron to down-regulate the levels of wnd and restrain synaptic terminal growth at the neuromuscular junction (NMJ).</text>
</comment>
<comment type="pathway">
    <text evidence="2">Protein modification; protein ubiquitination.</text>
</comment>
<comment type="subunit">
    <text evidence="2">Component of an E3 ubiquitin ligase complex composed of hiw and Fsn.</text>
</comment>
<comment type="subcellular location">
    <subcellularLocation>
        <location evidence="2">Synapse</location>
    </subcellularLocation>
</comment>
<comment type="similarity">
    <text evidence="5">Belongs to the FBXO45/Fsn family.</text>
</comment>
<keyword id="KW-0524">Neurogenesis</keyword>
<keyword id="KW-1185">Reference proteome</keyword>
<keyword id="KW-0770">Synapse</keyword>
<keyword id="KW-0833">Ubl conjugation pathway</keyword>
<organism>
    <name type="scientific">Drosophila mojavensis</name>
    <name type="common">Fruit fly</name>
    <dbReference type="NCBI Taxonomy" id="7230"/>
    <lineage>
        <taxon>Eukaryota</taxon>
        <taxon>Metazoa</taxon>
        <taxon>Ecdysozoa</taxon>
        <taxon>Arthropoda</taxon>
        <taxon>Hexapoda</taxon>
        <taxon>Insecta</taxon>
        <taxon>Pterygota</taxon>
        <taxon>Neoptera</taxon>
        <taxon>Endopterygota</taxon>
        <taxon>Diptera</taxon>
        <taxon>Brachycera</taxon>
        <taxon>Muscomorpha</taxon>
        <taxon>Ephydroidea</taxon>
        <taxon>Drosophilidae</taxon>
        <taxon>Drosophila</taxon>
    </lineage>
</organism>
<name>FBSP1_DROMO</name>
<reference evidence="6" key="1">
    <citation type="journal article" date="2007" name="Nature">
        <title>Evolution of genes and genomes on the Drosophila phylogeny.</title>
        <authorList>
            <consortium name="Drosophila 12 genomes consortium"/>
        </authorList>
    </citation>
    <scope>NUCLEOTIDE SEQUENCE [LARGE SCALE GENOMIC DNA]</scope>
    <source>
        <strain evidence="6">Tucson 15081-1352.22</strain>
    </source>
</reference>
<dbReference type="EMBL" id="CH933808">
    <property type="protein sequence ID" value="EDW09978.1"/>
    <property type="molecule type" value="Genomic_DNA"/>
</dbReference>
<dbReference type="SMR" id="B4KNC5"/>
<dbReference type="FunCoup" id="B4KNC5">
    <property type="interactions" value="1194"/>
</dbReference>
<dbReference type="EnsemblMetazoa" id="FBtr0169489">
    <property type="protein sequence ID" value="FBpp0167981"/>
    <property type="gene ID" value="FBgn0141503"/>
</dbReference>
<dbReference type="EnsemblMetazoa" id="XM_002006007.4">
    <property type="protein sequence ID" value="XP_002006043.1"/>
    <property type="gene ID" value="LOC6580185"/>
</dbReference>
<dbReference type="GeneID" id="6580185"/>
<dbReference type="KEGG" id="dmo:Dmoj_GI18764"/>
<dbReference type="CTD" id="36460"/>
<dbReference type="eggNOG" id="KOG3953">
    <property type="taxonomic scope" value="Eukaryota"/>
</dbReference>
<dbReference type="HOGENOM" id="CLU_046756_1_0_1"/>
<dbReference type="InParanoid" id="B4KNC5"/>
<dbReference type="OMA" id="ATKRASM"/>
<dbReference type="OrthoDB" id="2398163at2759"/>
<dbReference type="PhylomeDB" id="B4KNC5"/>
<dbReference type="UniPathway" id="UPA00143"/>
<dbReference type="Proteomes" id="UP000009192">
    <property type="component" value="Unassembled WGS sequence"/>
</dbReference>
<dbReference type="GO" id="GO:0005938">
    <property type="term" value="C:cell cortex"/>
    <property type="evidence" value="ECO:0007669"/>
    <property type="project" value="EnsemblMetazoa"/>
</dbReference>
<dbReference type="GO" id="GO:0031594">
    <property type="term" value="C:neuromuscular junction"/>
    <property type="evidence" value="ECO:0000250"/>
    <property type="project" value="UniProtKB"/>
</dbReference>
<dbReference type="GO" id="GO:0005634">
    <property type="term" value="C:nucleus"/>
    <property type="evidence" value="ECO:0007669"/>
    <property type="project" value="EnsemblMetazoa"/>
</dbReference>
<dbReference type="GO" id="GO:0045495">
    <property type="term" value="C:pole plasm"/>
    <property type="evidence" value="ECO:0007669"/>
    <property type="project" value="EnsemblMetazoa"/>
</dbReference>
<dbReference type="GO" id="GO:0019005">
    <property type="term" value="C:SCF ubiquitin ligase complex"/>
    <property type="evidence" value="ECO:0007669"/>
    <property type="project" value="EnsemblMetazoa"/>
</dbReference>
<dbReference type="GO" id="GO:0010629">
    <property type="term" value="P:negative regulation of gene expression"/>
    <property type="evidence" value="ECO:0007669"/>
    <property type="project" value="EnsemblMetazoa"/>
</dbReference>
<dbReference type="GO" id="GO:0045886">
    <property type="term" value="P:negative regulation of synaptic assembly at neuromuscular junction"/>
    <property type="evidence" value="ECO:0000250"/>
    <property type="project" value="UniProtKB"/>
</dbReference>
<dbReference type="GO" id="GO:0007274">
    <property type="term" value="P:neuromuscular synaptic transmission"/>
    <property type="evidence" value="ECO:0000250"/>
    <property type="project" value="UniProtKB"/>
</dbReference>
<dbReference type="GO" id="GO:0045732">
    <property type="term" value="P:positive regulation of protein catabolic process"/>
    <property type="evidence" value="ECO:0007669"/>
    <property type="project" value="EnsemblMetazoa"/>
</dbReference>
<dbReference type="GO" id="GO:0043161">
    <property type="term" value="P:proteasome-mediated ubiquitin-dependent protein catabolic process"/>
    <property type="evidence" value="ECO:0007669"/>
    <property type="project" value="TreeGrafter"/>
</dbReference>
<dbReference type="GO" id="GO:0016567">
    <property type="term" value="P:protein ubiquitination"/>
    <property type="evidence" value="ECO:0007669"/>
    <property type="project" value="UniProtKB-UniPathway"/>
</dbReference>
<dbReference type="GO" id="GO:0060386">
    <property type="term" value="P:synapse assembly involved in innervation"/>
    <property type="evidence" value="ECO:0007669"/>
    <property type="project" value="TreeGrafter"/>
</dbReference>
<dbReference type="CDD" id="cd22111">
    <property type="entry name" value="F-box_FBXO45"/>
    <property type="match status" value="1"/>
</dbReference>
<dbReference type="CDD" id="cd12907">
    <property type="entry name" value="SPRY_Fbox"/>
    <property type="match status" value="1"/>
</dbReference>
<dbReference type="FunFam" id="1.20.1280.50:FF:000140">
    <property type="entry name" value="F-box/SPRY domain-containing protein 1"/>
    <property type="match status" value="1"/>
</dbReference>
<dbReference type="FunFam" id="2.60.120.920:FF:000017">
    <property type="entry name" value="F-box/SPRY domain-containing protein 1"/>
    <property type="match status" value="1"/>
</dbReference>
<dbReference type="Gene3D" id="1.20.1280.50">
    <property type="match status" value="1"/>
</dbReference>
<dbReference type="Gene3D" id="2.60.120.920">
    <property type="match status" value="1"/>
</dbReference>
<dbReference type="InterPro" id="IPR001870">
    <property type="entry name" value="B30.2/SPRY"/>
</dbReference>
<dbReference type="InterPro" id="IPR043136">
    <property type="entry name" value="B30.2/SPRY_sf"/>
</dbReference>
<dbReference type="InterPro" id="IPR013320">
    <property type="entry name" value="ConA-like_dom_sf"/>
</dbReference>
<dbReference type="InterPro" id="IPR036047">
    <property type="entry name" value="F-box-like_dom_sf"/>
</dbReference>
<dbReference type="InterPro" id="IPR001810">
    <property type="entry name" value="F-box_dom"/>
</dbReference>
<dbReference type="InterPro" id="IPR050672">
    <property type="entry name" value="FBXO45-Fsn/SPSB_families"/>
</dbReference>
<dbReference type="InterPro" id="IPR003877">
    <property type="entry name" value="SPRY_dom"/>
</dbReference>
<dbReference type="InterPro" id="IPR035784">
    <property type="entry name" value="SPRY_FBXO45"/>
</dbReference>
<dbReference type="PANTHER" id="PTHR12245:SF7">
    <property type="entry name" value="F-BOX_SPRY DOMAIN-CONTAINING PROTEIN 1"/>
    <property type="match status" value="1"/>
</dbReference>
<dbReference type="PANTHER" id="PTHR12245">
    <property type="entry name" value="SPRY DOMAIN CONTAINING SOCS BOX PROTEIN"/>
    <property type="match status" value="1"/>
</dbReference>
<dbReference type="Pfam" id="PF12937">
    <property type="entry name" value="F-box-like"/>
    <property type="match status" value="1"/>
</dbReference>
<dbReference type="Pfam" id="PF00622">
    <property type="entry name" value="SPRY"/>
    <property type="match status" value="1"/>
</dbReference>
<dbReference type="SMART" id="SM00449">
    <property type="entry name" value="SPRY"/>
    <property type="match status" value="1"/>
</dbReference>
<dbReference type="SUPFAM" id="SSF49899">
    <property type="entry name" value="Concanavalin A-like lectins/glucanases"/>
    <property type="match status" value="1"/>
</dbReference>
<dbReference type="SUPFAM" id="SSF81383">
    <property type="entry name" value="F-box domain"/>
    <property type="match status" value="1"/>
</dbReference>
<dbReference type="PROSITE" id="PS50188">
    <property type="entry name" value="B302_SPRY"/>
    <property type="match status" value="1"/>
</dbReference>
<proteinExistence type="inferred from homology"/>
<gene>
    <name evidence="2" type="primary">Fsn</name>
    <name type="ORF">GI18764</name>
</gene>
<feature type="chain" id="PRO_0000383313" description="F-box/SPRY domain-containing protein 1">
    <location>
        <begin position="1"/>
        <end position="252"/>
    </location>
</feature>
<feature type="domain" description="F-box" evidence="3">
    <location>
        <begin position="1"/>
        <end position="48"/>
    </location>
</feature>
<feature type="domain" description="B30.2/SPRY" evidence="4">
    <location>
        <begin position="58"/>
        <end position="250"/>
    </location>
</feature>
<sequence length="252" mass="28546">MVDPLCNYNVLEAIFSYLELSDLSRCSQVCKSWYHFLNDENSDVWRWHCLRKLPKESIKSDLLASVTTYKTKLRAYLHAWNPNDCSRNVYIKPNGFTLHRNPVAQSTDAARAKIGFRQGRHAWEVIWEGPLGTVAVIGISTKEAALQCHGYVALLGSDDQSWGWNLVENHLLHNGDMQGNYPLLNNAPKYQVGERIRVILDCDDNTLSFEKNYEFLGVAFRGLPAKKLYPTVSAVYGNTEVSMVYLGTPLDG</sequence>